<dbReference type="EMBL" id="CU234118">
    <property type="protein sequence ID" value="CAL74326.1"/>
    <property type="molecule type" value="Genomic_DNA"/>
</dbReference>
<dbReference type="RefSeq" id="WP_011923607.1">
    <property type="nucleotide sequence ID" value="NC_009445.1"/>
</dbReference>
<dbReference type="SMR" id="A4YKA0"/>
<dbReference type="STRING" id="114615.BRADO0378"/>
<dbReference type="KEGG" id="bra:BRADO0378"/>
<dbReference type="eggNOG" id="COG0228">
    <property type="taxonomic scope" value="Bacteria"/>
</dbReference>
<dbReference type="HOGENOM" id="CLU_100590_3_1_5"/>
<dbReference type="OrthoDB" id="9807878at2"/>
<dbReference type="Proteomes" id="UP000001994">
    <property type="component" value="Chromosome"/>
</dbReference>
<dbReference type="GO" id="GO:0005737">
    <property type="term" value="C:cytoplasm"/>
    <property type="evidence" value="ECO:0007669"/>
    <property type="project" value="UniProtKB-ARBA"/>
</dbReference>
<dbReference type="GO" id="GO:0015935">
    <property type="term" value="C:small ribosomal subunit"/>
    <property type="evidence" value="ECO:0007669"/>
    <property type="project" value="TreeGrafter"/>
</dbReference>
<dbReference type="GO" id="GO:0003735">
    <property type="term" value="F:structural constituent of ribosome"/>
    <property type="evidence" value="ECO:0007669"/>
    <property type="project" value="InterPro"/>
</dbReference>
<dbReference type="GO" id="GO:0006412">
    <property type="term" value="P:translation"/>
    <property type="evidence" value="ECO:0007669"/>
    <property type="project" value="UniProtKB-UniRule"/>
</dbReference>
<dbReference type="FunFam" id="3.30.1320.10:FF:000008">
    <property type="entry name" value="30S ribosomal protein S16"/>
    <property type="match status" value="1"/>
</dbReference>
<dbReference type="Gene3D" id="3.30.1320.10">
    <property type="match status" value="1"/>
</dbReference>
<dbReference type="HAMAP" id="MF_00385">
    <property type="entry name" value="Ribosomal_bS16"/>
    <property type="match status" value="1"/>
</dbReference>
<dbReference type="InterPro" id="IPR000307">
    <property type="entry name" value="Ribosomal_bS16"/>
</dbReference>
<dbReference type="InterPro" id="IPR023803">
    <property type="entry name" value="Ribosomal_bS16_dom_sf"/>
</dbReference>
<dbReference type="NCBIfam" id="TIGR00002">
    <property type="entry name" value="S16"/>
    <property type="match status" value="1"/>
</dbReference>
<dbReference type="PANTHER" id="PTHR12919">
    <property type="entry name" value="30S RIBOSOMAL PROTEIN S16"/>
    <property type="match status" value="1"/>
</dbReference>
<dbReference type="PANTHER" id="PTHR12919:SF20">
    <property type="entry name" value="SMALL RIBOSOMAL SUBUNIT PROTEIN BS16M"/>
    <property type="match status" value="1"/>
</dbReference>
<dbReference type="Pfam" id="PF00886">
    <property type="entry name" value="Ribosomal_S16"/>
    <property type="match status" value="1"/>
</dbReference>
<dbReference type="SUPFAM" id="SSF54565">
    <property type="entry name" value="Ribosomal protein S16"/>
    <property type="match status" value="1"/>
</dbReference>
<proteinExistence type="inferred from homology"/>
<protein>
    <recommendedName>
        <fullName evidence="1">Small ribosomal subunit protein bS16</fullName>
    </recommendedName>
    <alternativeName>
        <fullName evidence="3">30S ribosomal protein S16</fullName>
    </alternativeName>
</protein>
<feature type="chain" id="PRO_1000049220" description="Small ribosomal subunit protein bS16">
    <location>
        <begin position="1"/>
        <end position="110"/>
    </location>
</feature>
<feature type="region of interest" description="Disordered" evidence="2">
    <location>
        <begin position="82"/>
        <end position="110"/>
    </location>
</feature>
<feature type="compositionally biased region" description="Basic and acidic residues" evidence="2">
    <location>
        <begin position="82"/>
        <end position="103"/>
    </location>
</feature>
<organism>
    <name type="scientific">Bradyrhizobium sp. (strain ORS 278)</name>
    <dbReference type="NCBI Taxonomy" id="114615"/>
    <lineage>
        <taxon>Bacteria</taxon>
        <taxon>Pseudomonadati</taxon>
        <taxon>Pseudomonadota</taxon>
        <taxon>Alphaproteobacteria</taxon>
        <taxon>Hyphomicrobiales</taxon>
        <taxon>Nitrobacteraceae</taxon>
        <taxon>Bradyrhizobium</taxon>
    </lineage>
</organism>
<reference key="1">
    <citation type="journal article" date="2007" name="Science">
        <title>Legumes symbioses: absence of nod genes in photosynthetic bradyrhizobia.</title>
        <authorList>
            <person name="Giraud E."/>
            <person name="Moulin L."/>
            <person name="Vallenet D."/>
            <person name="Barbe V."/>
            <person name="Cytryn E."/>
            <person name="Avarre J.-C."/>
            <person name="Jaubert M."/>
            <person name="Simon D."/>
            <person name="Cartieaux F."/>
            <person name="Prin Y."/>
            <person name="Bena G."/>
            <person name="Hannibal L."/>
            <person name="Fardoux J."/>
            <person name="Kojadinovic M."/>
            <person name="Vuillet L."/>
            <person name="Lajus A."/>
            <person name="Cruveiller S."/>
            <person name="Rouy Z."/>
            <person name="Mangenot S."/>
            <person name="Segurens B."/>
            <person name="Dossat C."/>
            <person name="Franck W.L."/>
            <person name="Chang W.-S."/>
            <person name="Saunders E."/>
            <person name="Bruce D."/>
            <person name="Richardson P."/>
            <person name="Normand P."/>
            <person name="Dreyfus B."/>
            <person name="Pignol D."/>
            <person name="Stacey G."/>
            <person name="Emerich D."/>
            <person name="Vermeglio A."/>
            <person name="Medigue C."/>
            <person name="Sadowsky M."/>
        </authorList>
    </citation>
    <scope>NUCLEOTIDE SEQUENCE [LARGE SCALE GENOMIC DNA]</scope>
    <source>
        <strain>ORS 278</strain>
    </source>
</reference>
<sequence length="110" mass="12428">MSVVIRLARAGTKKRPVYHVVVADSRFPRDGRFIERLGYFNPLMPKDNEARLKLDMEKVKGWLAKGAQPSDRVARFLDTAGVKKREARNNPEKAVPRKERKAQAEAAAKG</sequence>
<evidence type="ECO:0000255" key="1">
    <source>
        <dbReference type="HAMAP-Rule" id="MF_00385"/>
    </source>
</evidence>
<evidence type="ECO:0000256" key="2">
    <source>
        <dbReference type="SAM" id="MobiDB-lite"/>
    </source>
</evidence>
<evidence type="ECO:0000305" key="3"/>
<name>RS16_BRASO</name>
<gene>
    <name evidence="1" type="primary">rpsP</name>
    <name type="ordered locus">BRADO0378</name>
</gene>
<comment type="similarity">
    <text evidence="1">Belongs to the bacterial ribosomal protein bS16 family.</text>
</comment>
<accession>A4YKA0</accession>
<keyword id="KW-1185">Reference proteome</keyword>
<keyword id="KW-0687">Ribonucleoprotein</keyword>
<keyword id="KW-0689">Ribosomal protein</keyword>